<evidence type="ECO:0000255" key="1">
    <source>
        <dbReference type="HAMAP-Rule" id="MF_01553"/>
    </source>
</evidence>
<dbReference type="EC" id="2.7.7.6" evidence="1"/>
<dbReference type="EMBL" id="AE016877">
    <property type="protein sequence ID" value="AAP10896.1"/>
    <property type="molecule type" value="Genomic_DNA"/>
</dbReference>
<dbReference type="RefSeq" id="NP_833695.1">
    <property type="nucleotide sequence ID" value="NC_004722.1"/>
</dbReference>
<dbReference type="RefSeq" id="WP_000576435.1">
    <property type="nucleotide sequence ID" value="NZ_CP138336.1"/>
</dbReference>
<dbReference type="SMR" id="Q819K0"/>
<dbReference type="STRING" id="226900.BC_3976"/>
<dbReference type="KEGG" id="bce:BC3976"/>
<dbReference type="PATRIC" id="fig|226900.8.peg.4102"/>
<dbReference type="HOGENOM" id="CLU_187518_0_0_9"/>
<dbReference type="OrthoDB" id="2147503at2"/>
<dbReference type="Proteomes" id="UP000001417">
    <property type="component" value="Chromosome"/>
</dbReference>
<dbReference type="GO" id="GO:0000428">
    <property type="term" value="C:DNA-directed RNA polymerase complex"/>
    <property type="evidence" value="ECO:0007669"/>
    <property type="project" value="UniProtKB-KW"/>
</dbReference>
<dbReference type="GO" id="GO:0003677">
    <property type="term" value="F:DNA binding"/>
    <property type="evidence" value="ECO:0007669"/>
    <property type="project" value="UniProtKB-UniRule"/>
</dbReference>
<dbReference type="GO" id="GO:0003899">
    <property type="term" value="F:DNA-directed RNA polymerase activity"/>
    <property type="evidence" value="ECO:0007669"/>
    <property type="project" value="UniProtKB-UniRule"/>
</dbReference>
<dbReference type="GO" id="GO:0006351">
    <property type="term" value="P:DNA-templated transcription"/>
    <property type="evidence" value="ECO:0007669"/>
    <property type="project" value="UniProtKB-UniRule"/>
</dbReference>
<dbReference type="Gene3D" id="3.10.20.730">
    <property type="entry name" value="RNAP, epsilon subunit-like"/>
    <property type="match status" value="1"/>
</dbReference>
<dbReference type="HAMAP" id="MF_01553">
    <property type="entry name" value="RNApol_bact_RpoY"/>
    <property type="match status" value="1"/>
</dbReference>
<dbReference type="InterPro" id="IPR009907">
    <property type="entry name" value="RpoY"/>
</dbReference>
<dbReference type="NCBIfam" id="NF010188">
    <property type="entry name" value="PRK13667.1"/>
    <property type="match status" value="1"/>
</dbReference>
<dbReference type="Pfam" id="PF07288">
    <property type="entry name" value="RpoY"/>
    <property type="match status" value="1"/>
</dbReference>
<organism>
    <name type="scientific">Bacillus cereus (strain ATCC 14579 / DSM 31 / CCUG 7414 / JCM 2152 / NBRC 15305 / NCIMB 9373 / NCTC 2599 / NRRL B-3711)</name>
    <dbReference type="NCBI Taxonomy" id="226900"/>
    <lineage>
        <taxon>Bacteria</taxon>
        <taxon>Bacillati</taxon>
        <taxon>Bacillota</taxon>
        <taxon>Bacilli</taxon>
        <taxon>Bacillales</taxon>
        <taxon>Bacillaceae</taxon>
        <taxon>Bacillus</taxon>
        <taxon>Bacillus cereus group</taxon>
    </lineage>
</organism>
<protein>
    <recommendedName>
        <fullName evidence="1">DNA-directed RNA polymerase subunit epsilon</fullName>
        <shortName evidence="1">RNAP epsilon subunit</shortName>
        <ecNumber evidence="1">2.7.7.6</ecNumber>
    </recommendedName>
    <alternativeName>
        <fullName evidence="1">RNA polymerase epsilon subunit</fullName>
    </alternativeName>
    <alternativeName>
        <fullName evidence="1">Transcriptase subunit epsilon</fullName>
    </alternativeName>
</protein>
<feature type="chain" id="PRO_0000163116" description="DNA-directed RNA polymerase subunit epsilon">
    <location>
        <begin position="1"/>
        <end position="70"/>
    </location>
</feature>
<sequence length="70" mass="8186">MIFKVFYQEKLTEVPVRENTKVLYLEATSEKDVRTKLNKFAYNIEFVQSVTGAHLEYEKENADLTLAEIV</sequence>
<gene>
    <name evidence="1" type="primary">rpoY</name>
    <name type="ordered locus">BC_3976</name>
</gene>
<name>RPOY_BACCR</name>
<accession>Q819K0</accession>
<keyword id="KW-0240">DNA-directed RNA polymerase</keyword>
<keyword id="KW-0548">Nucleotidyltransferase</keyword>
<keyword id="KW-1185">Reference proteome</keyword>
<keyword id="KW-0804">Transcription</keyword>
<keyword id="KW-0808">Transferase</keyword>
<proteinExistence type="inferred from homology"/>
<reference key="1">
    <citation type="journal article" date="2003" name="Nature">
        <title>Genome sequence of Bacillus cereus and comparative analysis with Bacillus anthracis.</title>
        <authorList>
            <person name="Ivanova N."/>
            <person name="Sorokin A."/>
            <person name="Anderson I."/>
            <person name="Galleron N."/>
            <person name="Candelon B."/>
            <person name="Kapatral V."/>
            <person name="Bhattacharyya A."/>
            <person name="Reznik G."/>
            <person name="Mikhailova N."/>
            <person name="Lapidus A."/>
            <person name="Chu L."/>
            <person name="Mazur M."/>
            <person name="Goltsman E."/>
            <person name="Larsen N."/>
            <person name="D'Souza M."/>
            <person name="Walunas T."/>
            <person name="Grechkin Y."/>
            <person name="Pusch G."/>
            <person name="Haselkorn R."/>
            <person name="Fonstein M."/>
            <person name="Ehrlich S.D."/>
            <person name="Overbeek R."/>
            <person name="Kyrpides N.C."/>
        </authorList>
    </citation>
    <scope>NUCLEOTIDE SEQUENCE [LARGE SCALE GENOMIC DNA]</scope>
    <source>
        <strain>ATCC 14579 / DSM 31 / CCUG 7414 / JCM 2152 / NBRC 15305 / NCIMB 9373 / NCTC 2599 / NRRL B-3711</strain>
    </source>
</reference>
<comment type="function">
    <text evidence="1">A non-essential component of RNA polymerase (RNAP).</text>
</comment>
<comment type="catalytic activity">
    <reaction evidence="1">
        <text>RNA(n) + a ribonucleoside 5'-triphosphate = RNA(n+1) + diphosphate</text>
        <dbReference type="Rhea" id="RHEA:21248"/>
        <dbReference type="Rhea" id="RHEA-COMP:14527"/>
        <dbReference type="Rhea" id="RHEA-COMP:17342"/>
        <dbReference type="ChEBI" id="CHEBI:33019"/>
        <dbReference type="ChEBI" id="CHEBI:61557"/>
        <dbReference type="ChEBI" id="CHEBI:140395"/>
        <dbReference type="EC" id="2.7.7.6"/>
    </reaction>
</comment>
<comment type="subunit">
    <text evidence="1">RNAP is composed of a core of 2 alpha, a beta and a beta' subunit. The core is associated with a delta subunit, and at least one of epsilon or omega. When a sigma factor is associated with the core the holoenzyme is formed, which can initiate transcription.</text>
</comment>
<comment type="similarity">
    <text evidence="1">Belongs to the RNA polymerase subunit epsilon family.</text>
</comment>